<name>YIF1B_DANRE</name>
<dbReference type="EMBL" id="BC085552">
    <property type="protein sequence ID" value="AAH85552.2"/>
    <property type="molecule type" value="mRNA"/>
</dbReference>
<dbReference type="RefSeq" id="NP_001007335.2">
    <property type="nucleotide sequence ID" value="NM_001007334.1"/>
</dbReference>
<dbReference type="FunCoup" id="Q5U3G6">
    <property type="interactions" value="2212"/>
</dbReference>
<dbReference type="STRING" id="7955.ENSDARP00000059284"/>
<dbReference type="PaxDb" id="7955-ENSDARP00000059284"/>
<dbReference type="GeneID" id="492462"/>
<dbReference type="KEGG" id="dre:492462"/>
<dbReference type="AGR" id="ZFIN:ZDB-GENE-041114-16"/>
<dbReference type="CTD" id="90522"/>
<dbReference type="ZFIN" id="ZDB-GENE-041114-16">
    <property type="gene designation" value="yif1b"/>
</dbReference>
<dbReference type="eggNOG" id="KOG3094">
    <property type="taxonomic scope" value="Eukaryota"/>
</dbReference>
<dbReference type="InParanoid" id="Q5U3G6"/>
<dbReference type="OrthoDB" id="337750at2759"/>
<dbReference type="PhylomeDB" id="Q5U3G6"/>
<dbReference type="PRO" id="PR:Q5U3G6"/>
<dbReference type="Proteomes" id="UP000000437">
    <property type="component" value="Chromosome 18"/>
</dbReference>
<dbReference type="GO" id="GO:0030134">
    <property type="term" value="C:COPII-coated ER to Golgi transport vesicle"/>
    <property type="evidence" value="ECO:0000318"/>
    <property type="project" value="GO_Central"/>
</dbReference>
<dbReference type="GO" id="GO:0005783">
    <property type="term" value="C:endoplasmic reticulum"/>
    <property type="evidence" value="ECO:0000250"/>
    <property type="project" value="UniProtKB"/>
</dbReference>
<dbReference type="GO" id="GO:0005789">
    <property type="term" value="C:endoplasmic reticulum membrane"/>
    <property type="evidence" value="ECO:0000318"/>
    <property type="project" value="GO_Central"/>
</dbReference>
<dbReference type="GO" id="GO:0005793">
    <property type="term" value="C:endoplasmic reticulum-Golgi intermediate compartment"/>
    <property type="evidence" value="ECO:0000250"/>
    <property type="project" value="UniProtKB"/>
</dbReference>
<dbReference type="GO" id="GO:0033116">
    <property type="term" value="C:endoplasmic reticulum-Golgi intermediate compartment membrane"/>
    <property type="evidence" value="ECO:0007669"/>
    <property type="project" value="UniProtKB-SubCell"/>
</dbReference>
<dbReference type="GO" id="GO:0005794">
    <property type="term" value="C:Golgi apparatus"/>
    <property type="evidence" value="ECO:0000250"/>
    <property type="project" value="UniProtKB"/>
</dbReference>
<dbReference type="GO" id="GO:0000139">
    <property type="term" value="C:Golgi membrane"/>
    <property type="evidence" value="ECO:0000318"/>
    <property type="project" value="GO_Central"/>
</dbReference>
<dbReference type="GO" id="GO:0060271">
    <property type="term" value="P:cilium assembly"/>
    <property type="evidence" value="ECO:0000250"/>
    <property type="project" value="UniProtKB"/>
</dbReference>
<dbReference type="GO" id="GO:0006888">
    <property type="term" value="P:endoplasmic reticulum to Golgi vesicle-mediated transport"/>
    <property type="evidence" value="ECO:0000250"/>
    <property type="project" value="UniProtKB"/>
</dbReference>
<dbReference type="GO" id="GO:0015031">
    <property type="term" value="P:protein transport"/>
    <property type="evidence" value="ECO:0007669"/>
    <property type="project" value="UniProtKB-KW"/>
</dbReference>
<dbReference type="GO" id="GO:0120316">
    <property type="term" value="P:sperm flagellum assembly"/>
    <property type="evidence" value="ECO:0000250"/>
    <property type="project" value="UniProtKB"/>
</dbReference>
<dbReference type="InterPro" id="IPR005578">
    <property type="entry name" value="Yif1_fam"/>
</dbReference>
<dbReference type="PANTHER" id="PTHR14083:SF1">
    <property type="entry name" value="PROTEIN YIF1B"/>
    <property type="match status" value="1"/>
</dbReference>
<dbReference type="PANTHER" id="PTHR14083">
    <property type="entry name" value="YIP1 INTERACTING FACTOR HOMOLOG YIF1 PROTEIN"/>
    <property type="match status" value="1"/>
</dbReference>
<dbReference type="Pfam" id="PF03878">
    <property type="entry name" value="YIF1"/>
    <property type="match status" value="1"/>
</dbReference>
<feature type="chain" id="PRO_0000307261" description="Protein YIF1B">
    <location>
        <begin position="1"/>
        <end position="304"/>
    </location>
</feature>
<feature type="topological domain" description="Cytoplasmic" evidence="4">
    <location>
        <begin position="1"/>
        <end position="146"/>
    </location>
</feature>
<feature type="transmembrane region" description="Helical" evidence="4">
    <location>
        <begin position="147"/>
        <end position="167"/>
    </location>
</feature>
<feature type="topological domain" description="Extracellular" evidence="4">
    <location>
        <begin position="168"/>
        <end position="182"/>
    </location>
</feature>
<feature type="transmembrane region" description="Helical" evidence="4">
    <location>
        <begin position="183"/>
        <end position="203"/>
    </location>
</feature>
<feature type="topological domain" description="Cytoplasmic" evidence="4">
    <location>
        <begin position="204"/>
        <end position="212"/>
    </location>
</feature>
<feature type="transmembrane region" description="Helical" evidence="4">
    <location>
        <begin position="213"/>
        <end position="233"/>
    </location>
</feature>
<feature type="topological domain" description="Extracellular" evidence="4">
    <location>
        <begin position="234"/>
        <end position="236"/>
    </location>
</feature>
<feature type="transmembrane region" description="Helical" evidence="4">
    <location>
        <begin position="237"/>
        <end position="257"/>
    </location>
</feature>
<feature type="topological domain" description="Cytoplasmic" evidence="4">
    <location>
        <begin position="258"/>
        <end position="282"/>
    </location>
</feature>
<feature type="transmembrane region" description="Helical" evidence="4">
    <location>
        <begin position="283"/>
        <end position="303"/>
    </location>
</feature>
<feature type="topological domain" description="Extracellular" evidence="4">
    <location>
        <position position="304"/>
    </location>
</feature>
<feature type="region of interest" description="Disordered" evidence="5">
    <location>
        <begin position="21"/>
        <end position="54"/>
    </location>
</feature>
<feature type="compositionally biased region" description="Polar residues" evidence="5">
    <location>
        <begin position="30"/>
        <end position="42"/>
    </location>
</feature>
<evidence type="ECO:0000250" key="1">
    <source>
        <dbReference type="UniProtKB" id="Q5BJH7"/>
    </source>
</evidence>
<evidence type="ECO:0000250" key="2">
    <source>
        <dbReference type="UniProtKB" id="Q6PEC3"/>
    </source>
</evidence>
<evidence type="ECO:0000250" key="3">
    <source>
        <dbReference type="UniProtKB" id="Q9CX30"/>
    </source>
</evidence>
<evidence type="ECO:0000255" key="4"/>
<evidence type="ECO:0000256" key="5">
    <source>
        <dbReference type="SAM" id="MobiDB-lite"/>
    </source>
</evidence>
<evidence type="ECO:0000305" key="6"/>
<sequence length="304" mass="34029">MMEYPNQSGFRQRKLLPQVRMRGSAMEPSDPTQLFDDTSSGVNKHEPGRVGKSPDVFSGQNLLSDPMSNLAMAYGSSLASHGKEMMDKNLDRFIPISKLKYYFAVDTVYVGKKLGLLVFPYMHDNWEVNYQQDTPVAPRFDINAPDLYIPVMGFITYVLVAGLALGTQNRFSPEILGIQASSALVWLIIEVLAVLLSLYLVTVNTDLTTIDLVAFSGYKYVGMIVGVVAGLLFGRTGYYLALLWFCASIFVFTIRTLRLKILSEAAAEGRLVRGTKNQLRMYLTMAIAAAQPVFMYWLTFHLVR</sequence>
<comment type="function">
    <text evidence="2 3">Functions in endoplasmic reticulum to Golgi vesicle-mediated transport and regulates the proper organization of the endoplasmic reticulum and the Golgi (By similarity). Plays a key role in targeting to neuronal dendrites receptors such as HTR1A (By similarity). Plays also a role in primary cilium and sperm flagellum assembly probably through protein transport to these compartments (By similarity).</text>
</comment>
<comment type="subcellular location">
    <subcellularLocation>
        <location evidence="1">Endoplasmic reticulum membrane</location>
        <topology evidence="4">Multi-pass membrane protein</topology>
    </subcellularLocation>
    <subcellularLocation>
        <location evidence="1">Golgi apparatus membrane</location>
        <topology evidence="4">Multi-pass membrane protein</topology>
    </subcellularLocation>
    <subcellularLocation>
        <location evidence="1">Endoplasmic reticulum-Golgi intermediate compartment membrane</location>
        <topology evidence="4">Multi-pass membrane protein</topology>
    </subcellularLocation>
    <text evidence="1">Shuttles between the endoplasmic reticulum, the intermediate compartment and the Golgi apparatus.</text>
</comment>
<comment type="similarity">
    <text evidence="6">Belongs to the YIF1 family.</text>
</comment>
<gene>
    <name type="primary">yif1b</name>
    <name type="ORF">zgc:103562</name>
</gene>
<proteinExistence type="evidence at transcript level"/>
<organism>
    <name type="scientific">Danio rerio</name>
    <name type="common">Zebrafish</name>
    <name type="synonym">Brachydanio rerio</name>
    <dbReference type="NCBI Taxonomy" id="7955"/>
    <lineage>
        <taxon>Eukaryota</taxon>
        <taxon>Metazoa</taxon>
        <taxon>Chordata</taxon>
        <taxon>Craniata</taxon>
        <taxon>Vertebrata</taxon>
        <taxon>Euteleostomi</taxon>
        <taxon>Actinopterygii</taxon>
        <taxon>Neopterygii</taxon>
        <taxon>Teleostei</taxon>
        <taxon>Ostariophysi</taxon>
        <taxon>Cypriniformes</taxon>
        <taxon>Danionidae</taxon>
        <taxon>Danioninae</taxon>
        <taxon>Danio</taxon>
    </lineage>
</organism>
<keyword id="KW-0256">Endoplasmic reticulum</keyword>
<keyword id="KW-0333">Golgi apparatus</keyword>
<keyword id="KW-0472">Membrane</keyword>
<keyword id="KW-0653">Protein transport</keyword>
<keyword id="KW-1185">Reference proteome</keyword>
<keyword id="KW-0812">Transmembrane</keyword>
<keyword id="KW-1133">Transmembrane helix</keyword>
<keyword id="KW-0813">Transport</keyword>
<reference key="1">
    <citation type="submission" date="2004-11" db="EMBL/GenBank/DDBJ databases">
        <authorList>
            <consortium name="NIH - Zebrafish Gene Collection (ZGC) project"/>
        </authorList>
    </citation>
    <scope>NUCLEOTIDE SEQUENCE [LARGE SCALE MRNA]</scope>
    <source>
        <tissue>Ovary</tissue>
    </source>
</reference>
<protein>
    <recommendedName>
        <fullName>Protein YIF1B</fullName>
    </recommendedName>
    <alternativeName>
        <fullName>YIP1-interacting factor homolog B</fullName>
    </alternativeName>
</protein>
<accession>Q5U3G6</accession>